<name>RS10_CHESB</name>
<evidence type="ECO:0000255" key="1">
    <source>
        <dbReference type="HAMAP-Rule" id="MF_00508"/>
    </source>
</evidence>
<evidence type="ECO:0000305" key="2"/>
<sequence>MNGQNIRIRLKAFDHRVLDASTREIVSTAKRTGANVRGPIPLPTRIEKFTVNRSTHIDKKSREQFEMRTHKRLLDIVDPTPQTVDALMKLDLAAGVDVEIKL</sequence>
<comment type="function">
    <text evidence="1">Involved in the binding of tRNA to the ribosomes.</text>
</comment>
<comment type="subunit">
    <text evidence="1">Part of the 30S ribosomal subunit.</text>
</comment>
<comment type="similarity">
    <text evidence="1">Belongs to the universal ribosomal protein uS10 family.</text>
</comment>
<accession>Q11HQ1</accession>
<protein>
    <recommendedName>
        <fullName evidence="1">Small ribosomal subunit protein uS10</fullName>
    </recommendedName>
    <alternativeName>
        <fullName evidence="2">30S ribosomal protein S10</fullName>
    </alternativeName>
</protein>
<proteinExistence type="inferred from homology"/>
<feature type="chain" id="PRO_0000258556" description="Small ribosomal subunit protein uS10">
    <location>
        <begin position="1"/>
        <end position="102"/>
    </location>
</feature>
<gene>
    <name evidence="1" type="primary">rpsJ</name>
    <name type="ordered locus">Meso_1679</name>
</gene>
<dbReference type="EMBL" id="CP000390">
    <property type="protein sequence ID" value="ABG63074.1"/>
    <property type="molecule type" value="Genomic_DNA"/>
</dbReference>
<dbReference type="SMR" id="Q11HQ1"/>
<dbReference type="STRING" id="266779.Meso_1679"/>
<dbReference type="KEGG" id="mes:Meso_1679"/>
<dbReference type="eggNOG" id="COG0051">
    <property type="taxonomic scope" value="Bacteria"/>
</dbReference>
<dbReference type="HOGENOM" id="CLU_122625_1_3_5"/>
<dbReference type="OrthoDB" id="9804464at2"/>
<dbReference type="GO" id="GO:1990904">
    <property type="term" value="C:ribonucleoprotein complex"/>
    <property type="evidence" value="ECO:0007669"/>
    <property type="project" value="UniProtKB-KW"/>
</dbReference>
<dbReference type="GO" id="GO:0005840">
    <property type="term" value="C:ribosome"/>
    <property type="evidence" value="ECO:0007669"/>
    <property type="project" value="UniProtKB-KW"/>
</dbReference>
<dbReference type="GO" id="GO:0003735">
    <property type="term" value="F:structural constituent of ribosome"/>
    <property type="evidence" value="ECO:0007669"/>
    <property type="project" value="InterPro"/>
</dbReference>
<dbReference type="GO" id="GO:0000049">
    <property type="term" value="F:tRNA binding"/>
    <property type="evidence" value="ECO:0007669"/>
    <property type="project" value="UniProtKB-UniRule"/>
</dbReference>
<dbReference type="GO" id="GO:0006412">
    <property type="term" value="P:translation"/>
    <property type="evidence" value="ECO:0007669"/>
    <property type="project" value="UniProtKB-UniRule"/>
</dbReference>
<dbReference type="FunFam" id="3.30.70.600:FF:000001">
    <property type="entry name" value="30S ribosomal protein S10"/>
    <property type="match status" value="1"/>
</dbReference>
<dbReference type="Gene3D" id="3.30.70.600">
    <property type="entry name" value="Ribosomal protein S10 domain"/>
    <property type="match status" value="1"/>
</dbReference>
<dbReference type="HAMAP" id="MF_00508">
    <property type="entry name" value="Ribosomal_uS10"/>
    <property type="match status" value="1"/>
</dbReference>
<dbReference type="InterPro" id="IPR001848">
    <property type="entry name" value="Ribosomal_uS10"/>
</dbReference>
<dbReference type="InterPro" id="IPR018268">
    <property type="entry name" value="Ribosomal_uS10_CS"/>
</dbReference>
<dbReference type="InterPro" id="IPR027486">
    <property type="entry name" value="Ribosomal_uS10_dom"/>
</dbReference>
<dbReference type="InterPro" id="IPR036838">
    <property type="entry name" value="Ribosomal_uS10_dom_sf"/>
</dbReference>
<dbReference type="NCBIfam" id="NF001861">
    <property type="entry name" value="PRK00596.1"/>
    <property type="match status" value="1"/>
</dbReference>
<dbReference type="NCBIfam" id="TIGR01049">
    <property type="entry name" value="rpsJ_bact"/>
    <property type="match status" value="1"/>
</dbReference>
<dbReference type="PANTHER" id="PTHR11700">
    <property type="entry name" value="30S RIBOSOMAL PROTEIN S10 FAMILY MEMBER"/>
    <property type="match status" value="1"/>
</dbReference>
<dbReference type="Pfam" id="PF00338">
    <property type="entry name" value="Ribosomal_S10"/>
    <property type="match status" value="1"/>
</dbReference>
<dbReference type="PRINTS" id="PR00971">
    <property type="entry name" value="RIBOSOMALS10"/>
</dbReference>
<dbReference type="SMART" id="SM01403">
    <property type="entry name" value="Ribosomal_S10"/>
    <property type="match status" value="1"/>
</dbReference>
<dbReference type="SUPFAM" id="SSF54999">
    <property type="entry name" value="Ribosomal protein S10"/>
    <property type="match status" value="1"/>
</dbReference>
<dbReference type="PROSITE" id="PS00361">
    <property type="entry name" value="RIBOSOMAL_S10"/>
    <property type="match status" value="1"/>
</dbReference>
<organism>
    <name type="scientific">Chelativorans sp. (strain BNC1)</name>
    <dbReference type="NCBI Taxonomy" id="266779"/>
    <lineage>
        <taxon>Bacteria</taxon>
        <taxon>Pseudomonadati</taxon>
        <taxon>Pseudomonadota</taxon>
        <taxon>Alphaproteobacteria</taxon>
        <taxon>Hyphomicrobiales</taxon>
        <taxon>Phyllobacteriaceae</taxon>
        <taxon>Chelativorans</taxon>
    </lineage>
</organism>
<keyword id="KW-0687">Ribonucleoprotein</keyword>
<keyword id="KW-0689">Ribosomal protein</keyword>
<reference key="1">
    <citation type="submission" date="2006-06" db="EMBL/GenBank/DDBJ databases">
        <title>Complete sequence of chromosome of Mesorhizobium sp. BNC1.</title>
        <authorList>
            <consortium name="US DOE Joint Genome Institute"/>
            <person name="Copeland A."/>
            <person name="Lucas S."/>
            <person name="Lapidus A."/>
            <person name="Barry K."/>
            <person name="Detter J.C."/>
            <person name="Glavina del Rio T."/>
            <person name="Hammon N."/>
            <person name="Israni S."/>
            <person name="Dalin E."/>
            <person name="Tice H."/>
            <person name="Pitluck S."/>
            <person name="Chertkov O."/>
            <person name="Brettin T."/>
            <person name="Bruce D."/>
            <person name="Han C."/>
            <person name="Tapia R."/>
            <person name="Gilna P."/>
            <person name="Schmutz J."/>
            <person name="Larimer F."/>
            <person name="Land M."/>
            <person name="Hauser L."/>
            <person name="Kyrpides N."/>
            <person name="Mikhailova N."/>
            <person name="Richardson P."/>
        </authorList>
    </citation>
    <scope>NUCLEOTIDE SEQUENCE [LARGE SCALE GENOMIC DNA]</scope>
    <source>
        <strain>BNC1</strain>
    </source>
</reference>